<keyword id="KW-0678">Repressor</keyword>
<keyword id="KW-0346">Stress response</keyword>
<keyword id="KW-0804">Transcription</keyword>
<keyword id="KW-0805">Transcription regulation</keyword>
<protein>
    <recommendedName>
        <fullName evidence="1">Heat-inducible transcription repressor HrcA</fullName>
    </recommendedName>
</protein>
<feature type="chain" id="PRO_1000010445" description="Heat-inducible transcription repressor HrcA">
    <location>
        <begin position="1"/>
        <end position="347"/>
    </location>
</feature>
<gene>
    <name evidence="1" type="primary">hrcA</name>
    <name type="ordered locus">RHA1_ro01247</name>
</gene>
<sequence length="347" mass="37053">MSSTDDRRFEVLRAIVADYVSTQEPVGSKALVERHNLGVSSATVRNDMAFLESEGYIAQPHTSSGRVPTDKGYRQFVDRIADVKPLSTAERRAILEFLESGVDLDDVLRRGVRLLAQLTRQVAVVQYPTLSASSVRHLEVVALTPARLLLVLITDSGRVDQRIVELGDVLDDEDLARLRGLLGGALDGKRLAAASIAVSELADEAPEDLRDAVVRSATVLVETLVEHPEERLVLGGTANLTRNAADFSGISGFPGSLRAVLEALEEQVVVLKLLAATQDAGTVTVRIGEETQVEQMRGTSVISTGYGAAGTVLGGMGVLGPTRMDYPGTIASVAAVARYIGQVLAER</sequence>
<accession>Q0SHB5</accession>
<proteinExistence type="inferred from homology"/>
<evidence type="ECO:0000255" key="1">
    <source>
        <dbReference type="HAMAP-Rule" id="MF_00081"/>
    </source>
</evidence>
<organism>
    <name type="scientific">Rhodococcus jostii (strain RHA1)</name>
    <dbReference type="NCBI Taxonomy" id="101510"/>
    <lineage>
        <taxon>Bacteria</taxon>
        <taxon>Bacillati</taxon>
        <taxon>Actinomycetota</taxon>
        <taxon>Actinomycetes</taxon>
        <taxon>Mycobacteriales</taxon>
        <taxon>Nocardiaceae</taxon>
        <taxon>Rhodococcus</taxon>
    </lineage>
</organism>
<dbReference type="EMBL" id="CP000431">
    <property type="protein sequence ID" value="ABG93071.1"/>
    <property type="molecule type" value="Genomic_DNA"/>
</dbReference>
<dbReference type="RefSeq" id="WP_011594328.1">
    <property type="nucleotide sequence ID" value="NC_008268.1"/>
</dbReference>
<dbReference type="SMR" id="Q0SHB5"/>
<dbReference type="KEGG" id="rha:RHA1_ro01247"/>
<dbReference type="PATRIC" id="fig|101510.16.peg.1273"/>
<dbReference type="eggNOG" id="COG1420">
    <property type="taxonomic scope" value="Bacteria"/>
</dbReference>
<dbReference type="HOGENOM" id="CLU_050019_2_0_11"/>
<dbReference type="OrthoDB" id="9783139at2"/>
<dbReference type="Proteomes" id="UP000008710">
    <property type="component" value="Chromosome"/>
</dbReference>
<dbReference type="GO" id="GO:0003677">
    <property type="term" value="F:DNA binding"/>
    <property type="evidence" value="ECO:0007669"/>
    <property type="project" value="InterPro"/>
</dbReference>
<dbReference type="GO" id="GO:0045892">
    <property type="term" value="P:negative regulation of DNA-templated transcription"/>
    <property type="evidence" value="ECO:0007669"/>
    <property type="project" value="UniProtKB-UniRule"/>
</dbReference>
<dbReference type="FunFam" id="1.10.10.10:FF:000049">
    <property type="entry name" value="Heat-inducible transcription repressor HrcA"/>
    <property type="match status" value="1"/>
</dbReference>
<dbReference type="Gene3D" id="3.30.450.40">
    <property type="match status" value="1"/>
</dbReference>
<dbReference type="Gene3D" id="3.30.390.60">
    <property type="entry name" value="Heat-inducible transcription repressor hrca homolog, domain 3"/>
    <property type="match status" value="1"/>
</dbReference>
<dbReference type="Gene3D" id="1.10.10.10">
    <property type="entry name" value="Winged helix-like DNA-binding domain superfamily/Winged helix DNA-binding domain"/>
    <property type="match status" value="1"/>
</dbReference>
<dbReference type="HAMAP" id="MF_00081">
    <property type="entry name" value="HrcA"/>
    <property type="match status" value="1"/>
</dbReference>
<dbReference type="InterPro" id="IPR029016">
    <property type="entry name" value="GAF-like_dom_sf"/>
</dbReference>
<dbReference type="InterPro" id="IPR002571">
    <property type="entry name" value="HrcA"/>
</dbReference>
<dbReference type="InterPro" id="IPR021153">
    <property type="entry name" value="HrcA_C"/>
</dbReference>
<dbReference type="InterPro" id="IPR036388">
    <property type="entry name" value="WH-like_DNA-bd_sf"/>
</dbReference>
<dbReference type="InterPro" id="IPR036390">
    <property type="entry name" value="WH_DNA-bd_sf"/>
</dbReference>
<dbReference type="InterPro" id="IPR023120">
    <property type="entry name" value="WHTH_transcript_rep_HrcA_IDD"/>
</dbReference>
<dbReference type="NCBIfam" id="TIGR00331">
    <property type="entry name" value="hrcA"/>
    <property type="match status" value="1"/>
</dbReference>
<dbReference type="PANTHER" id="PTHR34824">
    <property type="entry name" value="HEAT-INDUCIBLE TRANSCRIPTION REPRESSOR HRCA"/>
    <property type="match status" value="1"/>
</dbReference>
<dbReference type="PANTHER" id="PTHR34824:SF1">
    <property type="entry name" value="HEAT-INDUCIBLE TRANSCRIPTION REPRESSOR HRCA"/>
    <property type="match status" value="1"/>
</dbReference>
<dbReference type="Pfam" id="PF01628">
    <property type="entry name" value="HrcA"/>
    <property type="match status" value="1"/>
</dbReference>
<dbReference type="PIRSF" id="PIRSF005485">
    <property type="entry name" value="HrcA"/>
    <property type="match status" value="1"/>
</dbReference>
<dbReference type="SUPFAM" id="SSF55781">
    <property type="entry name" value="GAF domain-like"/>
    <property type="match status" value="1"/>
</dbReference>
<dbReference type="SUPFAM" id="SSF46785">
    <property type="entry name" value="Winged helix' DNA-binding domain"/>
    <property type="match status" value="1"/>
</dbReference>
<name>HRCA_RHOJR</name>
<reference key="1">
    <citation type="journal article" date="2006" name="Proc. Natl. Acad. Sci. U.S.A.">
        <title>The complete genome of Rhodococcus sp. RHA1 provides insights into a catabolic powerhouse.</title>
        <authorList>
            <person name="McLeod M.P."/>
            <person name="Warren R.L."/>
            <person name="Hsiao W.W.L."/>
            <person name="Araki N."/>
            <person name="Myhre M."/>
            <person name="Fernandes C."/>
            <person name="Miyazawa D."/>
            <person name="Wong W."/>
            <person name="Lillquist A.L."/>
            <person name="Wang D."/>
            <person name="Dosanjh M."/>
            <person name="Hara H."/>
            <person name="Petrescu A."/>
            <person name="Morin R.D."/>
            <person name="Yang G."/>
            <person name="Stott J.M."/>
            <person name="Schein J.E."/>
            <person name="Shin H."/>
            <person name="Smailus D."/>
            <person name="Siddiqui A.S."/>
            <person name="Marra M.A."/>
            <person name="Jones S.J.M."/>
            <person name="Holt R."/>
            <person name="Brinkman F.S.L."/>
            <person name="Miyauchi K."/>
            <person name="Fukuda M."/>
            <person name="Davies J.E."/>
            <person name="Mohn W.W."/>
            <person name="Eltis L.D."/>
        </authorList>
    </citation>
    <scope>NUCLEOTIDE SEQUENCE [LARGE SCALE GENOMIC DNA]</scope>
    <source>
        <strain>RHA1</strain>
    </source>
</reference>
<comment type="function">
    <text evidence="1">Negative regulator of class I heat shock genes (grpE-dnaK-dnaJ and groELS operons). Prevents heat-shock induction of these operons.</text>
</comment>
<comment type="similarity">
    <text evidence="1">Belongs to the HrcA family.</text>
</comment>